<name>AVR9_PASFU</name>
<dbReference type="EMBL" id="M55289">
    <property type="protein sequence ID" value="AAA03344.1"/>
    <property type="molecule type" value="mRNA"/>
</dbReference>
<dbReference type="EMBL" id="X60284">
    <property type="protein sequence ID" value="CAA42824.1"/>
    <property type="molecule type" value="Genomic_DNA"/>
</dbReference>
<dbReference type="PIR" id="JQ2276">
    <property type="entry name" value="JQ2276"/>
</dbReference>
<dbReference type="KEGG" id="ag:AAA03344"/>
<dbReference type="PHI-base" id="PHI:2845"/>
<dbReference type="PHI-base" id="PHI:5473"/>
<dbReference type="PHI-base" id="PHI:5497"/>
<dbReference type="PHI-base" id="PHI:5542"/>
<dbReference type="PHI-base" id="PHI:5545"/>
<dbReference type="PHI-base" id="PHI:5558"/>
<dbReference type="PHI-base" id="PHI:5566"/>
<dbReference type="PHI-base" id="PHI:7"/>
<sequence>MKLSLLSVELALLIATTLPLCWAAALPVGLGVGLDYCNSSCTRAFDCLGQCGRCDFHKLQCVH</sequence>
<keyword id="KW-0903">Direct protein sequencing</keyword>
<keyword id="KW-1015">Disulfide bond</keyword>
<keyword id="KW-0960">Knottin</keyword>
<keyword id="KW-0732">Signal</keyword>
<keyword id="KW-0843">Virulence</keyword>
<reference key="1">
    <citation type="journal article" date="1991" name="Mol. Plant Microbe Interact.">
        <title>Cloning and characterization of cDNA of avirulence gene avr9 of the fungal pathogen Cladosporium fulvum, causal agent of tomato leaf mold.</title>
        <authorList>
            <person name="van Kan J.A.L."/>
            <person name="van den Ackerveken G.F.J.M."/>
            <person name="de Wit P.J.G.M."/>
        </authorList>
    </citation>
    <scope>NUCLEOTIDE SEQUENCE [MRNA]</scope>
    <source>
        <strain>Race 5</strain>
    </source>
</reference>
<reference key="2">
    <citation type="journal article" date="1992" name="Plant J.">
        <title>Molecular analysis of the avirulence gene avr9 of the fungal tomato pathogen Cladosporium fulvum fully supports the gene-for-gene hypothesis.</title>
        <authorList>
            <person name="Van Den Ackerveken G.F.J.M."/>
            <person name="van Kan J.A.L."/>
            <person name="de Wit P.J.G.M."/>
        </authorList>
    </citation>
    <scope>NUCLEOTIDE SEQUENCE [GENOMIC DNA]</scope>
    <source>
        <strain>Race 5</strain>
    </source>
</reference>
<reference key="3">
    <citation type="journal article" date="1988" name="Physiol. Mol. Plant Pathol.">
        <title>Purification and primary structure of a necrosis-inducing peptide from the apoplastic fluids of tomato infected with Cladosporium fulvum (syn. Fulvia fulva).</title>
        <authorList>
            <person name="Scholtens-Tomas I.M.J."/>
            <person name="de Wit P.J.G.M."/>
        </authorList>
    </citation>
    <scope>PROTEIN SEQUENCE OF 36-62</scope>
</reference>
<reference key="4">
    <citation type="journal article" date="1993" name="Plant Physiol.">
        <title>The AVR9 race-specific elicitor of Cladosporium fulvum is processed by endogenous and plant proteases.</title>
        <authorList>
            <person name="van den Ackerveken G.F.J.M."/>
            <person name="Vossen P."/>
            <person name="de Wit P.J.G.M."/>
        </authorList>
    </citation>
    <scope>PROTEOLYTIC PROCESSING</scope>
</reference>
<reference key="5">
    <citation type="journal article" date="1998" name="J. Pept. Res.">
        <title>Solid-phase synthesis, conformational analysis, and biological activity of AVR9 elicitor peptides of the fungal tomato pathogen Cladosporium fulvum.</title>
        <authorList>
            <person name="Mahe E."/>
            <person name="Vossen P."/>
            <person name="Van den Hooven H.W."/>
            <person name="Le-Nguyen D."/>
            <person name="Vervoort J."/>
            <person name="De Wit P.J.G.M."/>
        </authorList>
    </citation>
    <scope>SYNTHESIS</scope>
</reference>
<reference key="6">
    <citation type="journal article" date="1997" name="FEBS Lett.">
        <title>The race-specific elicitor AVR9 of the tomato pathogen Cladosporium fulvum: a cystine knot protein. Sequence-specific 1H NMR assignments, secondary structure and global fold of the protein.</title>
        <authorList>
            <person name="Vervoort J."/>
            <person name="van den Hooven H.W."/>
            <person name="Berg A."/>
            <person name="Vossen P."/>
            <person name="Vogelsang R."/>
            <person name="Joostwn M.H.A.J."/>
            <person name="de Wit P.J.G.M."/>
        </authorList>
    </citation>
    <scope>STRUCTURE BY NMR</scope>
    <scope>DISULFIDE BONDS</scope>
</reference>
<protein>
    <recommendedName>
        <fullName>Race-specific elicitor A9</fullName>
    </recommendedName>
</protein>
<comment type="function">
    <text>This necrosis-inducing peptide induces a hypersensitive response on Cf-9 tomato genotypes. Race-specific elicitors are compounds which only induce defense responses in genotypes of host plants which are resistant to the pathogenic race that produces the elicitor, but not in susceptible genotypes.</text>
</comment>
<comment type="domain">
    <text>The presence of a 'disulfide through disulfide knot' structurally defines this protein as a knottin.</text>
</comment>
<feature type="signal peptide" evidence="1">
    <location>
        <begin position="1"/>
        <end position="23"/>
    </location>
</feature>
<feature type="propeptide" id="PRO_0000020769" evidence="3">
    <location>
        <begin position="24"/>
        <end position="35"/>
    </location>
</feature>
<feature type="peptide" id="PRO_0000020770" description="Race-specific elicitor A9">
    <location>
        <begin position="36"/>
        <end position="63"/>
    </location>
</feature>
<feature type="disulfide bond" evidence="2">
    <location>
        <begin position="37"/>
        <end position="51"/>
    </location>
</feature>
<feature type="disulfide bond" evidence="2">
    <location>
        <begin position="41"/>
        <end position="54"/>
    </location>
</feature>
<feature type="disulfide bond" evidence="2">
    <location>
        <begin position="47"/>
        <end position="61"/>
    </location>
</feature>
<evidence type="ECO:0000255" key="1"/>
<evidence type="ECO:0000269" key="2">
    <source>
    </source>
</evidence>
<evidence type="ECO:0000269" key="3">
    <source ref="3"/>
</evidence>
<proteinExistence type="evidence at protein level"/>
<organism>
    <name type="scientific">Passalora fulva</name>
    <name type="common">Tomato leaf mold</name>
    <name type="synonym">Cladosporium fulvum</name>
    <dbReference type="NCBI Taxonomy" id="5499"/>
    <lineage>
        <taxon>Eukaryota</taxon>
        <taxon>Fungi</taxon>
        <taxon>Dikarya</taxon>
        <taxon>Ascomycota</taxon>
        <taxon>Pezizomycotina</taxon>
        <taxon>Dothideomycetes</taxon>
        <taxon>Dothideomycetidae</taxon>
        <taxon>Mycosphaerellales</taxon>
        <taxon>Mycosphaerellaceae</taxon>
        <taxon>Fulvia</taxon>
    </lineage>
</organism>
<gene>
    <name type="primary">AVR9</name>
</gene>
<accession>P22287</accession>